<proteinExistence type="inferred from homology"/>
<gene>
    <name evidence="1" type="primary">cysD1</name>
    <name type="ordered locus">Ssed_2961</name>
</gene>
<sequence>MSKHLTHLKQLEAESIQIMREVAAEFDNPVMLYSVGKDSSVLLHLARKAFYPGKIPFPLMHVDTNWKFKEMIEFRDQMAEKHGFDLIVHKNPRGIEMGISPFTHGSAKHTDIMKTEGLKQALDMHGFDAAFGGARRDEEKSRAKERVYSFRDSKHRWDPKNQRPELWNIYNGKVDKGESIRVFPLSNWTELDIWQYIYLEGIEIPSLYLAAERPVVERDGTLIMVDDERMPIESGEDVQTKMVRFRTLGCYPLTGAVESEAQTLPEIIQEMLLCTTSERQGRVIDNDSAGSMEKKKMEGYF</sequence>
<protein>
    <recommendedName>
        <fullName evidence="1">Sulfate adenylyltransferase subunit 2 1</fullName>
        <ecNumber evidence="1">2.7.7.4</ecNumber>
    </recommendedName>
    <alternativeName>
        <fullName evidence="1">ATP-sulfurylase small subunit 1</fullName>
    </alternativeName>
    <alternativeName>
        <fullName evidence="1">Sulfate adenylate transferase 1</fullName>
        <shortName evidence="1">SAT 1</shortName>
    </alternativeName>
</protein>
<organism>
    <name type="scientific">Shewanella sediminis (strain HAW-EB3)</name>
    <dbReference type="NCBI Taxonomy" id="425104"/>
    <lineage>
        <taxon>Bacteria</taxon>
        <taxon>Pseudomonadati</taxon>
        <taxon>Pseudomonadota</taxon>
        <taxon>Gammaproteobacteria</taxon>
        <taxon>Alteromonadales</taxon>
        <taxon>Shewanellaceae</taxon>
        <taxon>Shewanella</taxon>
    </lineage>
</organism>
<evidence type="ECO:0000255" key="1">
    <source>
        <dbReference type="HAMAP-Rule" id="MF_00064"/>
    </source>
</evidence>
<name>CYSD1_SHESH</name>
<feature type="chain" id="PRO_0000340220" description="Sulfate adenylyltransferase subunit 2 1">
    <location>
        <begin position="1"/>
        <end position="301"/>
    </location>
</feature>
<keyword id="KW-0067">ATP-binding</keyword>
<keyword id="KW-0547">Nucleotide-binding</keyword>
<keyword id="KW-0548">Nucleotidyltransferase</keyword>
<keyword id="KW-1185">Reference proteome</keyword>
<keyword id="KW-0808">Transferase</keyword>
<dbReference type="EC" id="2.7.7.4" evidence="1"/>
<dbReference type="EMBL" id="CP000821">
    <property type="protein sequence ID" value="ABV37568.1"/>
    <property type="molecule type" value="Genomic_DNA"/>
</dbReference>
<dbReference type="RefSeq" id="WP_012143298.1">
    <property type="nucleotide sequence ID" value="NC_009831.1"/>
</dbReference>
<dbReference type="SMR" id="A8FXJ5"/>
<dbReference type="STRING" id="425104.Ssed_2961"/>
<dbReference type="KEGG" id="sse:Ssed_2961"/>
<dbReference type="eggNOG" id="COG0175">
    <property type="taxonomic scope" value="Bacteria"/>
</dbReference>
<dbReference type="HOGENOM" id="CLU_043026_0_0_6"/>
<dbReference type="OrthoDB" id="9772604at2"/>
<dbReference type="UniPathway" id="UPA00140">
    <property type="reaction ID" value="UER00204"/>
</dbReference>
<dbReference type="Proteomes" id="UP000002015">
    <property type="component" value="Chromosome"/>
</dbReference>
<dbReference type="GO" id="GO:0005524">
    <property type="term" value="F:ATP binding"/>
    <property type="evidence" value="ECO:0007669"/>
    <property type="project" value="UniProtKB-KW"/>
</dbReference>
<dbReference type="GO" id="GO:0004781">
    <property type="term" value="F:sulfate adenylyltransferase (ATP) activity"/>
    <property type="evidence" value="ECO:0007669"/>
    <property type="project" value="UniProtKB-UniRule"/>
</dbReference>
<dbReference type="GO" id="GO:0070814">
    <property type="term" value="P:hydrogen sulfide biosynthetic process"/>
    <property type="evidence" value="ECO:0007669"/>
    <property type="project" value="UniProtKB-UniRule"/>
</dbReference>
<dbReference type="GO" id="GO:0000103">
    <property type="term" value="P:sulfate assimilation"/>
    <property type="evidence" value="ECO:0007669"/>
    <property type="project" value="UniProtKB-UniRule"/>
</dbReference>
<dbReference type="CDD" id="cd23946">
    <property type="entry name" value="Sulfate_adenylyltransferase_2"/>
    <property type="match status" value="1"/>
</dbReference>
<dbReference type="FunFam" id="3.40.50.620:FF:000002">
    <property type="entry name" value="Sulfate adenylyltransferase subunit 2"/>
    <property type="match status" value="1"/>
</dbReference>
<dbReference type="Gene3D" id="3.40.50.620">
    <property type="entry name" value="HUPs"/>
    <property type="match status" value="1"/>
</dbReference>
<dbReference type="HAMAP" id="MF_00064">
    <property type="entry name" value="Sulf_adenylyltr_sub2"/>
    <property type="match status" value="1"/>
</dbReference>
<dbReference type="InterPro" id="IPR002500">
    <property type="entry name" value="PAPS_reduct_dom"/>
</dbReference>
<dbReference type="InterPro" id="IPR014729">
    <property type="entry name" value="Rossmann-like_a/b/a_fold"/>
</dbReference>
<dbReference type="InterPro" id="IPR011784">
    <property type="entry name" value="SO4_adenylTrfase_ssu"/>
</dbReference>
<dbReference type="InterPro" id="IPR050128">
    <property type="entry name" value="Sulfate_adenylyltrnsfr_sub2"/>
</dbReference>
<dbReference type="NCBIfam" id="TIGR02039">
    <property type="entry name" value="CysD"/>
    <property type="match status" value="1"/>
</dbReference>
<dbReference type="NCBIfam" id="NF003587">
    <property type="entry name" value="PRK05253.1"/>
    <property type="match status" value="1"/>
</dbReference>
<dbReference type="NCBIfam" id="NF009214">
    <property type="entry name" value="PRK12563.1"/>
    <property type="match status" value="1"/>
</dbReference>
<dbReference type="PANTHER" id="PTHR43196">
    <property type="entry name" value="SULFATE ADENYLYLTRANSFERASE SUBUNIT 2"/>
    <property type="match status" value="1"/>
</dbReference>
<dbReference type="PANTHER" id="PTHR43196:SF1">
    <property type="entry name" value="SULFATE ADENYLYLTRANSFERASE SUBUNIT 2"/>
    <property type="match status" value="1"/>
</dbReference>
<dbReference type="Pfam" id="PF01507">
    <property type="entry name" value="PAPS_reduct"/>
    <property type="match status" value="1"/>
</dbReference>
<dbReference type="PIRSF" id="PIRSF002936">
    <property type="entry name" value="CysDAde_trans"/>
    <property type="match status" value="1"/>
</dbReference>
<dbReference type="SUPFAM" id="SSF52402">
    <property type="entry name" value="Adenine nucleotide alpha hydrolases-like"/>
    <property type="match status" value="1"/>
</dbReference>
<accession>A8FXJ5</accession>
<comment type="function">
    <text evidence="1">With CysN forms the ATP sulfurylase (ATPS) that catalyzes the adenylation of sulfate producing adenosine 5'-phosphosulfate (APS) and diphosphate, the first enzymatic step in sulfur assimilation pathway. APS synthesis involves the formation of a high-energy phosphoric-sulfuric acid anhydride bond driven by GTP hydrolysis by CysN coupled to ATP hydrolysis by CysD.</text>
</comment>
<comment type="catalytic activity">
    <reaction evidence="1">
        <text>sulfate + ATP + H(+) = adenosine 5'-phosphosulfate + diphosphate</text>
        <dbReference type="Rhea" id="RHEA:18133"/>
        <dbReference type="ChEBI" id="CHEBI:15378"/>
        <dbReference type="ChEBI" id="CHEBI:16189"/>
        <dbReference type="ChEBI" id="CHEBI:30616"/>
        <dbReference type="ChEBI" id="CHEBI:33019"/>
        <dbReference type="ChEBI" id="CHEBI:58243"/>
        <dbReference type="EC" id="2.7.7.4"/>
    </reaction>
</comment>
<comment type="pathway">
    <text evidence="1">Sulfur metabolism; hydrogen sulfide biosynthesis; sulfite from sulfate: step 1/3.</text>
</comment>
<comment type="subunit">
    <text evidence="1">Heterodimer composed of CysD, the smaller subunit, and CysN.</text>
</comment>
<comment type="similarity">
    <text evidence="1">Belongs to the PAPS reductase family. CysD subfamily.</text>
</comment>
<reference key="1">
    <citation type="submission" date="2007-08" db="EMBL/GenBank/DDBJ databases">
        <title>Complete sequence of Shewanella sediminis HAW-EB3.</title>
        <authorList>
            <consortium name="US DOE Joint Genome Institute"/>
            <person name="Copeland A."/>
            <person name="Lucas S."/>
            <person name="Lapidus A."/>
            <person name="Barry K."/>
            <person name="Glavina del Rio T."/>
            <person name="Dalin E."/>
            <person name="Tice H."/>
            <person name="Pitluck S."/>
            <person name="Chertkov O."/>
            <person name="Brettin T."/>
            <person name="Bruce D."/>
            <person name="Detter J.C."/>
            <person name="Han C."/>
            <person name="Schmutz J."/>
            <person name="Larimer F."/>
            <person name="Land M."/>
            <person name="Hauser L."/>
            <person name="Kyrpides N."/>
            <person name="Kim E."/>
            <person name="Zhao J.-S."/>
            <person name="Richardson P."/>
        </authorList>
    </citation>
    <scope>NUCLEOTIDE SEQUENCE [LARGE SCALE GENOMIC DNA]</scope>
    <source>
        <strain>HAW-EB3</strain>
    </source>
</reference>